<protein>
    <recommendedName>
        <fullName evidence="2">UDP-3-O-(3-hydroxymyristoyl)glucosamine N-acyltransferase</fullName>
        <shortName evidence="2">UDP-3-O-(3-OHC14)-GlcN N-acyltransferase</shortName>
        <ecNumber evidence="2">2.3.1.191</ecNumber>
    </recommendedName>
    <alternativeName>
        <fullName evidence="2">UDP-3-O-(3-hydroxytetradecanoyl)glucosamine N-acyltransferase</fullName>
    </alternativeName>
</protein>
<gene>
    <name evidence="2" type="primary">lpxD</name>
    <name type="synonym">firA</name>
    <name type="synonym">ssc</name>
    <name type="ordered locus">STY0249</name>
    <name type="ordered locus">t0227</name>
</gene>
<comment type="function">
    <text evidence="2">Catalyzes the N-acylation of UDP-3-O-(hydroxytetradecanoyl)glucosamine using 3-hydroxytetradecanoyl-ACP as the acyl donor. Is involved in the biosynthesis of lipid A, a phosphorylated glycolipid that anchors the lipopolysaccharide to the outer membrane of the cell.</text>
</comment>
<comment type="catalytic activity">
    <reaction evidence="2">
        <text>a UDP-3-O-[(3R)-3-hydroxyacyl]-alpha-D-glucosamine + a (3R)-hydroxyacyl-[ACP] = a UDP-2-N,3-O-bis[(3R)-3-hydroxyacyl]-alpha-D-glucosamine + holo-[ACP] + H(+)</text>
        <dbReference type="Rhea" id="RHEA:53836"/>
        <dbReference type="Rhea" id="RHEA-COMP:9685"/>
        <dbReference type="Rhea" id="RHEA-COMP:9945"/>
        <dbReference type="ChEBI" id="CHEBI:15378"/>
        <dbReference type="ChEBI" id="CHEBI:64479"/>
        <dbReference type="ChEBI" id="CHEBI:78827"/>
        <dbReference type="ChEBI" id="CHEBI:137740"/>
        <dbReference type="ChEBI" id="CHEBI:137748"/>
        <dbReference type="EC" id="2.3.1.191"/>
    </reaction>
</comment>
<comment type="catalytic activity">
    <reaction evidence="2">
        <text>UDP-3-O-[(3R)-3-hydroxytetradecanoyl]-alpha-D-glucosamine + (3R)-hydroxytetradecanoyl-[ACP] = UDP-2-N,3-O-bis[(3R)-3-hydroxytetradecanoyl]-alpha-D-glucosamine + holo-[ACP] + H(+)</text>
        <dbReference type="Rhea" id="RHEA:17817"/>
        <dbReference type="Rhea" id="RHEA-COMP:9646"/>
        <dbReference type="Rhea" id="RHEA-COMP:9685"/>
        <dbReference type="ChEBI" id="CHEBI:15378"/>
        <dbReference type="ChEBI" id="CHEBI:64479"/>
        <dbReference type="ChEBI" id="CHEBI:71573"/>
        <dbReference type="ChEBI" id="CHEBI:78474"/>
        <dbReference type="ChEBI" id="CHEBI:78847"/>
    </reaction>
</comment>
<comment type="pathway">
    <text evidence="2">Glycolipid biosynthesis; lipid IV(A) biosynthesis; lipid IV(A) from (3R)-3-hydroxytetradecanoyl-[acyl-carrier-protein] and UDP-N-acetyl-alpha-D-glucosamine: step 3/6.</text>
</comment>
<comment type="subunit">
    <text evidence="2">Homotrimer.</text>
</comment>
<comment type="similarity">
    <text evidence="2">Belongs to the transferase hexapeptide repeat family. LpxD subfamily.</text>
</comment>
<name>LPXD_SALTI</name>
<proteinExistence type="inferred from homology"/>
<evidence type="ECO:0000250" key="1"/>
<evidence type="ECO:0000255" key="2">
    <source>
        <dbReference type="HAMAP-Rule" id="MF_00523"/>
    </source>
</evidence>
<accession>P0A1X5</accession>
<accession>P18482</accession>
<organism>
    <name type="scientific">Salmonella typhi</name>
    <dbReference type="NCBI Taxonomy" id="90370"/>
    <lineage>
        <taxon>Bacteria</taxon>
        <taxon>Pseudomonadati</taxon>
        <taxon>Pseudomonadota</taxon>
        <taxon>Gammaproteobacteria</taxon>
        <taxon>Enterobacterales</taxon>
        <taxon>Enterobacteriaceae</taxon>
        <taxon>Salmonella</taxon>
    </lineage>
</organism>
<keyword id="KW-0012">Acyltransferase</keyword>
<keyword id="KW-0441">Lipid A biosynthesis</keyword>
<keyword id="KW-0444">Lipid biosynthesis</keyword>
<keyword id="KW-0443">Lipid metabolism</keyword>
<keyword id="KW-0677">Repeat</keyword>
<keyword id="KW-0808">Transferase</keyword>
<reference key="1">
    <citation type="journal article" date="2001" name="Nature">
        <title>Complete genome sequence of a multiple drug resistant Salmonella enterica serovar Typhi CT18.</title>
        <authorList>
            <person name="Parkhill J."/>
            <person name="Dougan G."/>
            <person name="James K.D."/>
            <person name="Thomson N.R."/>
            <person name="Pickard D."/>
            <person name="Wain J."/>
            <person name="Churcher C.M."/>
            <person name="Mungall K.L."/>
            <person name="Bentley S.D."/>
            <person name="Holden M.T.G."/>
            <person name="Sebaihia M."/>
            <person name="Baker S."/>
            <person name="Basham D."/>
            <person name="Brooks K."/>
            <person name="Chillingworth T."/>
            <person name="Connerton P."/>
            <person name="Cronin A."/>
            <person name="Davis P."/>
            <person name="Davies R.M."/>
            <person name="Dowd L."/>
            <person name="White N."/>
            <person name="Farrar J."/>
            <person name="Feltwell T."/>
            <person name="Hamlin N."/>
            <person name="Haque A."/>
            <person name="Hien T.T."/>
            <person name="Holroyd S."/>
            <person name="Jagels K."/>
            <person name="Krogh A."/>
            <person name="Larsen T.S."/>
            <person name="Leather S."/>
            <person name="Moule S."/>
            <person name="O'Gaora P."/>
            <person name="Parry C."/>
            <person name="Quail M.A."/>
            <person name="Rutherford K.M."/>
            <person name="Simmonds M."/>
            <person name="Skelton J."/>
            <person name="Stevens K."/>
            <person name="Whitehead S."/>
            <person name="Barrell B.G."/>
        </authorList>
    </citation>
    <scope>NUCLEOTIDE SEQUENCE [LARGE SCALE GENOMIC DNA]</scope>
    <source>
        <strain>CT18</strain>
    </source>
</reference>
<reference key="2">
    <citation type="journal article" date="2003" name="J. Bacteriol.">
        <title>Comparative genomics of Salmonella enterica serovar Typhi strains Ty2 and CT18.</title>
        <authorList>
            <person name="Deng W."/>
            <person name="Liou S.-R."/>
            <person name="Plunkett G. III"/>
            <person name="Mayhew G.F."/>
            <person name="Rose D.J."/>
            <person name="Burland V."/>
            <person name="Kodoyianni V."/>
            <person name="Schwartz D.C."/>
            <person name="Blattner F.R."/>
        </authorList>
    </citation>
    <scope>NUCLEOTIDE SEQUENCE [LARGE SCALE GENOMIC DNA]</scope>
    <source>
        <strain>ATCC 700931 / Ty2</strain>
    </source>
</reference>
<sequence>MPSIRLADLAEQLDAELHGDGDIVITGVASMQSATTGHITFMVNPKYREHLGLCQASAVVMTQDDLPFAKSAALVVKNPYLTYARMAQILDTTPQPAQNIAPSAVIDATATLGSNVSVGANAVIESGVQLGDNVVIGAGCFVGKNSKIGAGSRLWANVTIYHDIQIGENCLIQSSTVIGADGFGYANDRGNWVKIPQLGRVIIGDRVEIGACTTIDRGALDDTVIGNGVIIDNQCQIAHNVVIGDNTAVAGGVIMAGSLKIGRYCMIGGASVINGHMEICDKVTVTGMGMVMRPITEPGVYSSGIPLQPNKVWRKTAALVMNIDDMSKRLKAIERKVNQQD</sequence>
<dbReference type="EC" id="2.3.1.191" evidence="2"/>
<dbReference type="EMBL" id="AL513382">
    <property type="protein sequence ID" value="CAD08684.1"/>
    <property type="molecule type" value="Genomic_DNA"/>
</dbReference>
<dbReference type="EMBL" id="AE014613">
    <property type="protein sequence ID" value="AAO67957.1"/>
    <property type="molecule type" value="Genomic_DNA"/>
</dbReference>
<dbReference type="RefSeq" id="NP_454833.1">
    <property type="nucleotide sequence ID" value="NC_003198.1"/>
</dbReference>
<dbReference type="RefSeq" id="WP_001139265.1">
    <property type="nucleotide sequence ID" value="NZ_WSUR01000009.1"/>
</dbReference>
<dbReference type="SMR" id="P0A1X5"/>
<dbReference type="STRING" id="220341.gene:17584282"/>
<dbReference type="KEGG" id="stt:t0227"/>
<dbReference type="KEGG" id="sty:STY0249"/>
<dbReference type="PATRIC" id="fig|220341.7.peg.249"/>
<dbReference type="eggNOG" id="COG1044">
    <property type="taxonomic scope" value="Bacteria"/>
</dbReference>
<dbReference type="HOGENOM" id="CLU_049865_0_1_6"/>
<dbReference type="OMA" id="PAMEIHE"/>
<dbReference type="OrthoDB" id="9784739at2"/>
<dbReference type="UniPathway" id="UPA00359">
    <property type="reaction ID" value="UER00479"/>
</dbReference>
<dbReference type="Proteomes" id="UP000000541">
    <property type="component" value="Chromosome"/>
</dbReference>
<dbReference type="Proteomes" id="UP000002670">
    <property type="component" value="Chromosome"/>
</dbReference>
<dbReference type="GO" id="GO:0016020">
    <property type="term" value="C:membrane"/>
    <property type="evidence" value="ECO:0007669"/>
    <property type="project" value="GOC"/>
</dbReference>
<dbReference type="GO" id="GO:0016410">
    <property type="term" value="F:N-acyltransferase activity"/>
    <property type="evidence" value="ECO:0007669"/>
    <property type="project" value="InterPro"/>
</dbReference>
<dbReference type="GO" id="GO:0103118">
    <property type="term" value="F:UDP-3-O-(R-3-hydroxymyristoyl)-glucosamine N-acyltransferase activity"/>
    <property type="evidence" value="ECO:0007669"/>
    <property type="project" value="UniProtKB-EC"/>
</dbReference>
<dbReference type="GO" id="GO:0009245">
    <property type="term" value="P:lipid A biosynthetic process"/>
    <property type="evidence" value="ECO:0007669"/>
    <property type="project" value="UniProtKB-UniRule"/>
</dbReference>
<dbReference type="CDD" id="cd03352">
    <property type="entry name" value="LbH_LpxD"/>
    <property type="match status" value="1"/>
</dbReference>
<dbReference type="FunFam" id="1.20.5.170:FF:000032">
    <property type="entry name" value="UDP-3-O-(3-hydroxymyristoyl)glucosamine N-acyltransferase"/>
    <property type="match status" value="1"/>
</dbReference>
<dbReference type="FunFam" id="2.160.10.10:FF:000005">
    <property type="entry name" value="UDP-3-O-(3-hydroxymyristoyl)glucosamine N-acyltransferase"/>
    <property type="match status" value="1"/>
</dbReference>
<dbReference type="FunFam" id="3.40.1390.10:FF:000001">
    <property type="entry name" value="UDP-3-O-(3-hydroxymyristoyl)glucosamine N-acyltransferase"/>
    <property type="match status" value="1"/>
</dbReference>
<dbReference type="Gene3D" id="1.20.5.170">
    <property type="match status" value="1"/>
</dbReference>
<dbReference type="Gene3D" id="2.160.10.10">
    <property type="entry name" value="Hexapeptide repeat proteins"/>
    <property type="match status" value="1"/>
</dbReference>
<dbReference type="Gene3D" id="3.40.1390.10">
    <property type="entry name" value="MurE/MurF, N-terminal domain"/>
    <property type="match status" value="1"/>
</dbReference>
<dbReference type="HAMAP" id="MF_00523">
    <property type="entry name" value="LpxD"/>
    <property type="match status" value="1"/>
</dbReference>
<dbReference type="InterPro" id="IPR001451">
    <property type="entry name" value="Hexapep"/>
</dbReference>
<dbReference type="InterPro" id="IPR018357">
    <property type="entry name" value="Hexapep_transf_CS"/>
</dbReference>
<dbReference type="InterPro" id="IPR007691">
    <property type="entry name" value="LpxD"/>
</dbReference>
<dbReference type="InterPro" id="IPR011004">
    <property type="entry name" value="Trimer_LpxA-like_sf"/>
</dbReference>
<dbReference type="InterPro" id="IPR020573">
    <property type="entry name" value="UDP_GlcNAc_AcTrfase_non-rep"/>
</dbReference>
<dbReference type="NCBIfam" id="TIGR01853">
    <property type="entry name" value="lipid_A_lpxD"/>
    <property type="match status" value="1"/>
</dbReference>
<dbReference type="NCBIfam" id="NF002060">
    <property type="entry name" value="PRK00892.1"/>
    <property type="match status" value="1"/>
</dbReference>
<dbReference type="PANTHER" id="PTHR43378">
    <property type="entry name" value="UDP-3-O-ACYLGLUCOSAMINE N-ACYLTRANSFERASE"/>
    <property type="match status" value="1"/>
</dbReference>
<dbReference type="PANTHER" id="PTHR43378:SF2">
    <property type="entry name" value="UDP-3-O-ACYLGLUCOSAMINE N-ACYLTRANSFERASE 1, MITOCHONDRIAL-RELATED"/>
    <property type="match status" value="1"/>
</dbReference>
<dbReference type="Pfam" id="PF00132">
    <property type="entry name" value="Hexapep"/>
    <property type="match status" value="3"/>
</dbReference>
<dbReference type="Pfam" id="PF04613">
    <property type="entry name" value="LpxD"/>
    <property type="match status" value="1"/>
</dbReference>
<dbReference type="SUPFAM" id="SSF51161">
    <property type="entry name" value="Trimeric LpxA-like enzymes"/>
    <property type="match status" value="1"/>
</dbReference>
<dbReference type="PROSITE" id="PS00101">
    <property type="entry name" value="HEXAPEP_TRANSFERASES"/>
    <property type="match status" value="4"/>
</dbReference>
<feature type="initiator methionine" description="Removed" evidence="1">
    <location>
        <position position="1"/>
    </location>
</feature>
<feature type="chain" id="PRO_0000059701" description="UDP-3-O-(3-hydroxymyristoyl)glucosamine N-acyltransferase">
    <location>
        <begin position="2"/>
        <end position="341"/>
    </location>
</feature>
<feature type="active site" description="Proton acceptor" evidence="2">
    <location>
        <position position="239"/>
    </location>
</feature>